<comment type="function">
    <text evidence="1">Bifunctional enzyme that catalyzes two sequential steps of tryptophan biosynthetic pathway. The first reaction is catalyzed by the isomerase, coded by the TrpF domain; the second reaction is catalyzed by the synthase, coded by the TrpC domain (By similarity).</text>
</comment>
<comment type="catalytic activity">
    <reaction>
        <text>N-(5-phospho-beta-D-ribosyl)anthranilate = 1-(2-carboxyphenylamino)-1-deoxy-D-ribulose 5-phosphate</text>
        <dbReference type="Rhea" id="RHEA:21540"/>
        <dbReference type="ChEBI" id="CHEBI:18277"/>
        <dbReference type="ChEBI" id="CHEBI:58613"/>
        <dbReference type="EC" id="5.3.1.24"/>
    </reaction>
</comment>
<comment type="catalytic activity">
    <reaction>
        <text>1-(2-carboxyphenylamino)-1-deoxy-D-ribulose 5-phosphate + H(+) = (1S,2R)-1-C-(indol-3-yl)glycerol 3-phosphate + CO2 + H2O</text>
        <dbReference type="Rhea" id="RHEA:23476"/>
        <dbReference type="ChEBI" id="CHEBI:15377"/>
        <dbReference type="ChEBI" id="CHEBI:15378"/>
        <dbReference type="ChEBI" id="CHEBI:16526"/>
        <dbReference type="ChEBI" id="CHEBI:58613"/>
        <dbReference type="ChEBI" id="CHEBI:58866"/>
        <dbReference type="EC" id="4.1.1.48"/>
    </reaction>
</comment>
<comment type="pathway">
    <text>Amino-acid biosynthesis; L-tryptophan biosynthesis; L-tryptophan from chorismate: step 3/5.</text>
</comment>
<comment type="pathway">
    <text>Amino-acid biosynthesis; L-tryptophan biosynthesis; L-tryptophan from chorismate: step 4/5.</text>
</comment>
<comment type="similarity">
    <text evidence="2">In the N-terminal section; belongs to the TrpC family.</text>
</comment>
<comment type="similarity">
    <text evidence="2">In the C-terminal section; belongs to the TrpF family.</text>
</comment>
<keyword id="KW-0028">Amino-acid biosynthesis</keyword>
<keyword id="KW-0057">Aromatic amino acid biosynthesis</keyword>
<keyword id="KW-0210">Decarboxylase</keyword>
<keyword id="KW-0413">Isomerase</keyword>
<keyword id="KW-0456">Lyase</keyword>
<keyword id="KW-0511">Multifunctional enzyme</keyword>
<keyword id="KW-1185">Reference proteome</keyword>
<keyword id="KW-0822">Tryptophan biosynthesis</keyword>
<feature type="chain" id="PRO_0000154280" description="Tryptophan biosynthesis protein TrpCF">
    <location>
        <begin position="1"/>
        <end position="452"/>
    </location>
</feature>
<feature type="region of interest" description="Indole-3-glycerol phosphate synthase">
    <location>
        <begin position="1"/>
        <end position="253"/>
    </location>
</feature>
<feature type="region of interest" description="N-(5'-phosphoribosyl)anthranilate isomerase">
    <location>
        <begin position="254"/>
        <end position="448"/>
    </location>
</feature>
<reference key="1">
    <citation type="journal article" date="1997" name="Nature">
        <title>The complete genome sequence of the gastric pathogen Helicobacter pylori.</title>
        <authorList>
            <person name="Tomb J.-F."/>
            <person name="White O."/>
            <person name="Kerlavage A.R."/>
            <person name="Clayton R.A."/>
            <person name="Sutton G.G."/>
            <person name="Fleischmann R.D."/>
            <person name="Ketchum K.A."/>
            <person name="Klenk H.-P."/>
            <person name="Gill S.R."/>
            <person name="Dougherty B.A."/>
            <person name="Nelson K.E."/>
            <person name="Quackenbush J."/>
            <person name="Zhou L."/>
            <person name="Kirkness E.F."/>
            <person name="Peterson S.N."/>
            <person name="Loftus B.J."/>
            <person name="Richardson D.L."/>
            <person name="Dodson R.J."/>
            <person name="Khalak H.G."/>
            <person name="Glodek A."/>
            <person name="McKenney K."/>
            <person name="FitzGerald L.M."/>
            <person name="Lee N."/>
            <person name="Adams M.D."/>
            <person name="Hickey E.K."/>
            <person name="Berg D.E."/>
            <person name="Gocayne J.D."/>
            <person name="Utterback T.R."/>
            <person name="Peterson J.D."/>
            <person name="Kelley J.M."/>
            <person name="Cotton M.D."/>
            <person name="Weidman J.F."/>
            <person name="Fujii C."/>
            <person name="Bowman C."/>
            <person name="Watthey L."/>
            <person name="Wallin E."/>
            <person name="Hayes W.S."/>
            <person name="Borodovsky M."/>
            <person name="Karp P.D."/>
            <person name="Smith H.O."/>
            <person name="Fraser C.M."/>
            <person name="Venter J.C."/>
        </authorList>
    </citation>
    <scope>NUCLEOTIDE SEQUENCE [LARGE SCALE GENOMIC DNA]</scope>
    <source>
        <strain>ATCC 700392 / 26695</strain>
    </source>
</reference>
<proteinExistence type="inferred from homology"/>
<name>TRPC_HELPY</name>
<accession>O25867</accession>
<organism>
    <name type="scientific">Helicobacter pylori (strain ATCC 700392 / 26695)</name>
    <name type="common">Campylobacter pylori</name>
    <dbReference type="NCBI Taxonomy" id="85962"/>
    <lineage>
        <taxon>Bacteria</taxon>
        <taxon>Pseudomonadati</taxon>
        <taxon>Campylobacterota</taxon>
        <taxon>Epsilonproteobacteria</taxon>
        <taxon>Campylobacterales</taxon>
        <taxon>Helicobacteraceae</taxon>
        <taxon>Helicobacter</taxon>
    </lineage>
</organism>
<protein>
    <recommendedName>
        <fullName>Tryptophan biosynthesis protein TrpCF</fullName>
    </recommendedName>
    <domain>
        <recommendedName>
            <fullName>Indole-3-glycerol phosphate synthase</fullName>
            <shortName>IGPS</shortName>
            <ecNumber>4.1.1.48</ecNumber>
        </recommendedName>
    </domain>
    <domain>
        <recommendedName>
            <fullName>N-(5'-phospho-ribosyl)anthranilate isomerase</fullName>
            <shortName>PRAI</shortName>
            <ecNumber>5.3.1.24</ecNumber>
        </recommendedName>
    </domain>
</protein>
<sequence length="452" mass="50858">MPSVLENILKDKLLEVSDLKKNHALPININPSDRDFKKALLEKKTSFILECKKASPSKGLIRKDFDLLKITKTYEKFASCISVLADSKYFLGSYENIKIVSQHSTKPILCKDFIIDAFQIKLARMMGANAVLLMLSVLDDKNYLELFNLAKSLNMSVLTEVSNQQEIEHLLKLQYDIIGINNRDLHTLKTDINHTLKLRPLLPKDALIISESGIYSHAQIKALAPYVNGFLVGSSLMKEKDLKKACIKLILGENKVCGLTRIKDAKAVYKNHFIYGGLIFEKSSPRYIKPKEALKITKAVKKLDFVGVFVKDSIKKIQKIVKKLDLKAVQLYGYSQKEIAQLKKALPKTCAIWQVISVMSAKDLVPKTKEASLILYDTKGDKMGGNGVSFDWEILENVKTPFMLAGGLNLDNIQKALKVEALGLDFNSGLEISPGIKNKDKIKRLARILREY</sequence>
<dbReference type="EC" id="4.1.1.48"/>
<dbReference type="EC" id="5.3.1.24"/>
<dbReference type="EMBL" id="AE000511">
    <property type="protein sequence ID" value="AAD08324.1"/>
    <property type="molecule type" value="Genomic_DNA"/>
</dbReference>
<dbReference type="PIR" id="G64679">
    <property type="entry name" value="G64679"/>
</dbReference>
<dbReference type="RefSeq" id="NP_208071.1">
    <property type="nucleotide sequence ID" value="NC_000915.1"/>
</dbReference>
<dbReference type="SMR" id="O25867"/>
<dbReference type="FunCoup" id="O25867">
    <property type="interactions" value="247"/>
</dbReference>
<dbReference type="IntAct" id="O25867">
    <property type="interactions" value="2"/>
</dbReference>
<dbReference type="MINT" id="O25867"/>
<dbReference type="STRING" id="85962.HP_1279"/>
<dbReference type="PaxDb" id="85962-C694_06610"/>
<dbReference type="EnsemblBacteria" id="AAD08324">
    <property type="protein sequence ID" value="AAD08324"/>
    <property type="gene ID" value="HP_1279"/>
</dbReference>
<dbReference type="KEGG" id="heo:C694_06610"/>
<dbReference type="KEGG" id="hpy:HP_1279"/>
<dbReference type="PATRIC" id="fig|85962.47.peg.1372"/>
<dbReference type="eggNOG" id="COG0134">
    <property type="taxonomic scope" value="Bacteria"/>
</dbReference>
<dbReference type="eggNOG" id="COG0135">
    <property type="taxonomic scope" value="Bacteria"/>
</dbReference>
<dbReference type="InParanoid" id="O25867"/>
<dbReference type="OrthoDB" id="9804217at2"/>
<dbReference type="PhylomeDB" id="O25867"/>
<dbReference type="UniPathway" id="UPA00035">
    <property type="reaction ID" value="UER00042"/>
</dbReference>
<dbReference type="UniPathway" id="UPA00035">
    <property type="reaction ID" value="UER00043"/>
</dbReference>
<dbReference type="Proteomes" id="UP000000429">
    <property type="component" value="Chromosome"/>
</dbReference>
<dbReference type="GO" id="GO:0004425">
    <property type="term" value="F:indole-3-glycerol-phosphate synthase activity"/>
    <property type="evidence" value="ECO:0000318"/>
    <property type="project" value="GO_Central"/>
</dbReference>
<dbReference type="GO" id="GO:0004640">
    <property type="term" value="F:phosphoribosylanthranilate isomerase activity"/>
    <property type="evidence" value="ECO:0000318"/>
    <property type="project" value="GO_Central"/>
</dbReference>
<dbReference type="GO" id="GO:0000162">
    <property type="term" value="P:L-tryptophan biosynthetic process"/>
    <property type="evidence" value="ECO:0000318"/>
    <property type="project" value="GO_Central"/>
</dbReference>
<dbReference type="CDD" id="cd00331">
    <property type="entry name" value="IGPS"/>
    <property type="match status" value="1"/>
</dbReference>
<dbReference type="CDD" id="cd00405">
    <property type="entry name" value="PRAI"/>
    <property type="match status" value="1"/>
</dbReference>
<dbReference type="FunFam" id="3.20.20.70:FF:000024">
    <property type="entry name" value="Indole-3-glycerol phosphate synthase"/>
    <property type="match status" value="1"/>
</dbReference>
<dbReference type="FunFam" id="3.20.20.70:FF:000384">
    <property type="entry name" value="Multifunctional fusion protein"/>
    <property type="match status" value="1"/>
</dbReference>
<dbReference type="Gene3D" id="3.20.20.70">
    <property type="entry name" value="Aldolase class I"/>
    <property type="match status" value="2"/>
</dbReference>
<dbReference type="HAMAP" id="MF_00134_B">
    <property type="entry name" value="IGPS_B"/>
    <property type="match status" value="1"/>
</dbReference>
<dbReference type="HAMAP" id="MF_00135">
    <property type="entry name" value="PRAI"/>
    <property type="match status" value="1"/>
</dbReference>
<dbReference type="InterPro" id="IPR013785">
    <property type="entry name" value="Aldolase_TIM"/>
</dbReference>
<dbReference type="InterPro" id="IPR045186">
    <property type="entry name" value="Indole-3-glycerol_P_synth"/>
</dbReference>
<dbReference type="InterPro" id="IPR013798">
    <property type="entry name" value="Indole-3-glycerol_P_synth_dom"/>
</dbReference>
<dbReference type="InterPro" id="IPR001468">
    <property type="entry name" value="Indole-3-GlycerolPSynthase_CS"/>
</dbReference>
<dbReference type="InterPro" id="IPR001240">
    <property type="entry name" value="PRAI_dom"/>
</dbReference>
<dbReference type="InterPro" id="IPR011060">
    <property type="entry name" value="RibuloseP-bd_barrel"/>
</dbReference>
<dbReference type="NCBIfam" id="NF006945">
    <property type="entry name" value="PRK09427.1"/>
    <property type="match status" value="1"/>
</dbReference>
<dbReference type="PANTHER" id="PTHR22854:SF2">
    <property type="entry name" value="INDOLE-3-GLYCEROL-PHOSPHATE SYNTHASE"/>
    <property type="match status" value="1"/>
</dbReference>
<dbReference type="PANTHER" id="PTHR22854">
    <property type="entry name" value="TRYPTOPHAN BIOSYNTHESIS PROTEIN"/>
    <property type="match status" value="1"/>
</dbReference>
<dbReference type="Pfam" id="PF00218">
    <property type="entry name" value="IGPS"/>
    <property type="match status" value="1"/>
</dbReference>
<dbReference type="Pfam" id="PF00697">
    <property type="entry name" value="PRAI"/>
    <property type="match status" value="1"/>
</dbReference>
<dbReference type="SUPFAM" id="SSF51366">
    <property type="entry name" value="Ribulose-phoshate binding barrel"/>
    <property type="match status" value="2"/>
</dbReference>
<dbReference type="PROSITE" id="PS00614">
    <property type="entry name" value="IGPS"/>
    <property type="match status" value="1"/>
</dbReference>
<evidence type="ECO:0000250" key="1"/>
<evidence type="ECO:0000305" key="2"/>
<gene>
    <name type="primary">trpC</name>
    <name type="ordered locus">HP_1279</name>
</gene>